<proteinExistence type="evidence at protein level"/>
<accession>Q60775</accession>
<organism>
    <name type="scientific">Mus musculus</name>
    <name type="common">Mouse</name>
    <dbReference type="NCBI Taxonomy" id="10090"/>
    <lineage>
        <taxon>Eukaryota</taxon>
        <taxon>Metazoa</taxon>
        <taxon>Chordata</taxon>
        <taxon>Craniata</taxon>
        <taxon>Vertebrata</taxon>
        <taxon>Euteleostomi</taxon>
        <taxon>Mammalia</taxon>
        <taxon>Eutheria</taxon>
        <taxon>Euarchontoglires</taxon>
        <taxon>Glires</taxon>
        <taxon>Rodentia</taxon>
        <taxon>Myomorpha</taxon>
        <taxon>Muroidea</taxon>
        <taxon>Muridae</taxon>
        <taxon>Murinae</taxon>
        <taxon>Mus</taxon>
        <taxon>Mus</taxon>
    </lineage>
</organism>
<evidence type="ECO:0000250" key="1"/>
<evidence type="ECO:0000250" key="2">
    <source>
        <dbReference type="UniProtKB" id="P32519"/>
    </source>
</evidence>
<evidence type="ECO:0000255" key="3">
    <source>
        <dbReference type="PROSITE-ProRule" id="PRU00237"/>
    </source>
</evidence>
<evidence type="ECO:0000256" key="4">
    <source>
        <dbReference type="SAM" id="MobiDB-lite"/>
    </source>
</evidence>
<evidence type="ECO:0000305" key="5"/>
<sequence length="612" mass="66221">MAAVVQQNDLVFEFASNGMEDEQQLGDPAIFPAVIVEHVPGADILNSYAGLACVEEPNDMITESSLDVAEEEIIDDDDDDITLTVEASCHNGDETIETIEAAEALLNIDSPSPPVLDEKQINNNIFSSSEDDIVAPITHVSVTLDGIPEVMETQQVQETNADSPGASSPEQRKRKKGRKTKPPRPDSPTTTPNISVKKKNKDGKGNTIYLWEFLLALLQDKATCPKYIKWTQREKGIFKLVDSKAVSRLWGKHKNKPDMNYETMGRALRYYYQRGILAKVEGQRLVYQFKEMPKDLIYIDDEDPSSSIESSDQSLSSTTASSRNQANRSRVSSSPGIKGGAATILKPGNSKAANPKDPVEVGQPSEVLRTVQPSQAPYPTQLFRTVHVVQPVQAVPEEATIASTMQEEAANSSVPSIRTIQASTQVPVVVSPGNQQLHTVTVPLTTVIASIDPSSGAGSQKFILQTIPSSQPMTVLKENVMLQSQKPGSPSIVLSPTQVQQVLTSNVQSICNGAGSVASAPSFSATTPVVTFSRSSQLVAHPPGTVITSVIKAQETKTLKQEVEKKAEDDLNEDAEKSAQQPQPYVMVLSSSNGFSSQVAVKQNELLEPNSF</sequence>
<feature type="chain" id="PRO_0000204086" description="ETS-related transcription factor Elf-1">
    <location>
        <begin position="1"/>
        <end position="612"/>
    </location>
</feature>
<feature type="DNA-binding region" description="ETS" evidence="3">
    <location>
        <begin position="208"/>
        <end position="290"/>
    </location>
</feature>
<feature type="region of interest" description="Disordered" evidence="4">
    <location>
        <begin position="156"/>
        <end position="199"/>
    </location>
</feature>
<feature type="region of interest" description="Disordered" evidence="4">
    <location>
        <begin position="300"/>
        <end position="361"/>
    </location>
</feature>
<feature type="region of interest" description="Disordered" evidence="4">
    <location>
        <begin position="562"/>
        <end position="586"/>
    </location>
</feature>
<feature type="compositionally biased region" description="Polar residues" evidence="4">
    <location>
        <begin position="156"/>
        <end position="169"/>
    </location>
</feature>
<feature type="compositionally biased region" description="Basic residues" evidence="4">
    <location>
        <begin position="172"/>
        <end position="182"/>
    </location>
</feature>
<feature type="compositionally biased region" description="Low complexity" evidence="4">
    <location>
        <begin position="305"/>
        <end position="322"/>
    </location>
</feature>
<feature type="compositionally biased region" description="Polar residues" evidence="4">
    <location>
        <begin position="323"/>
        <end position="335"/>
    </location>
</feature>
<feature type="compositionally biased region" description="Basic and acidic residues" evidence="4">
    <location>
        <begin position="562"/>
        <end position="577"/>
    </location>
</feature>
<feature type="modified residue" description="Phosphoserine" evidence="2">
    <location>
        <position position="110"/>
    </location>
</feature>
<feature type="modified residue" description="Phosphoserine" evidence="2">
    <location>
        <position position="163"/>
    </location>
</feature>
<feature type="modified residue" description="Phosphoserine" evidence="2">
    <location>
        <position position="167"/>
    </location>
</feature>
<feature type="modified residue" description="Phosphoserine" evidence="2">
    <location>
        <position position="168"/>
    </location>
</feature>
<feature type="modified residue" description="Phosphoserine" evidence="2">
    <location>
        <position position="187"/>
    </location>
</feature>
<feature type="modified residue" description="Phosphothreonine" evidence="2">
    <location>
        <position position="190"/>
    </location>
</feature>
<feature type="modified residue" description="Phosphoserine" evidence="2">
    <location>
        <position position="431"/>
    </location>
</feature>
<keyword id="KW-0010">Activator</keyword>
<keyword id="KW-0238">DNA-binding</keyword>
<keyword id="KW-0539">Nucleus</keyword>
<keyword id="KW-0597">Phosphoprotein</keyword>
<keyword id="KW-1185">Reference proteome</keyword>
<keyword id="KW-0804">Transcription</keyword>
<keyword id="KW-0805">Transcription regulation</keyword>
<comment type="function">
    <text evidence="1">Transcription factor that activates the LYN and BLK promoters.</text>
</comment>
<comment type="subunit">
    <text evidence="1">Binds to the underphosphorylated form of RB. May interact with other transcription factors in order to regulate specific genes. Interacts with RUNX1. Interacts with SP1; the interaction is inhibited by glycosylation of SP1 (By similarity).</text>
</comment>
<comment type="subcellular location">
    <subcellularLocation>
        <location>Nucleus</location>
    </subcellularLocation>
</comment>
<comment type="tissue specificity">
    <text>Predominantly found in hematopoietic cells. Detected in other cell types such as fibroblasts.</text>
</comment>
<comment type="similarity">
    <text evidence="5">Belongs to the ETS family.</text>
</comment>
<dbReference type="EMBL" id="U19617">
    <property type="protein sequence ID" value="AAB17097.1"/>
    <property type="molecule type" value="mRNA"/>
</dbReference>
<dbReference type="EMBL" id="BC057134">
    <property type="protein sequence ID" value="AAH57134.1"/>
    <property type="molecule type" value="mRNA"/>
</dbReference>
<dbReference type="CCDS" id="CCDS27301.1"/>
<dbReference type="RefSeq" id="NP_001273340.1">
    <property type="nucleotide sequence ID" value="NM_001286411.2"/>
</dbReference>
<dbReference type="RefSeq" id="NP_001409169.1">
    <property type="nucleotide sequence ID" value="NM_001422240.1"/>
</dbReference>
<dbReference type="RefSeq" id="NP_001409170.1">
    <property type="nucleotide sequence ID" value="NM_001422241.1"/>
</dbReference>
<dbReference type="RefSeq" id="NP_001409171.1">
    <property type="nucleotide sequence ID" value="NM_001422242.1"/>
</dbReference>
<dbReference type="RefSeq" id="NP_031946.1">
    <property type="nucleotide sequence ID" value="NM_007920.5"/>
</dbReference>
<dbReference type="RefSeq" id="XP_011243248.1">
    <property type="nucleotide sequence ID" value="XM_011244946.2"/>
</dbReference>
<dbReference type="RefSeq" id="XP_011243249.1">
    <property type="nucleotide sequence ID" value="XM_011244947.1"/>
</dbReference>
<dbReference type="SMR" id="Q60775"/>
<dbReference type="BioGRID" id="199426">
    <property type="interactions" value="6"/>
</dbReference>
<dbReference type="FunCoup" id="Q60775">
    <property type="interactions" value="2414"/>
</dbReference>
<dbReference type="IntAct" id="Q60775">
    <property type="interactions" value="1"/>
</dbReference>
<dbReference type="STRING" id="10090.ENSMUSP00000046515"/>
<dbReference type="GlyGen" id="Q60775">
    <property type="glycosylation" value="1 site, 1 O-linked glycan (1 site)"/>
</dbReference>
<dbReference type="iPTMnet" id="Q60775"/>
<dbReference type="PhosphoSitePlus" id="Q60775"/>
<dbReference type="jPOST" id="Q60775"/>
<dbReference type="PaxDb" id="10090-ENSMUSP00000046515"/>
<dbReference type="ProteomicsDB" id="275451"/>
<dbReference type="Pumba" id="Q60775"/>
<dbReference type="Antibodypedia" id="906">
    <property type="antibodies" value="390 antibodies from 38 providers"/>
</dbReference>
<dbReference type="DNASU" id="13709"/>
<dbReference type="Ensembl" id="ENSMUST00000040131.13">
    <property type="protein sequence ID" value="ENSMUSP00000046515.6"/>
    <property type="gene ID" value="ENSMUSG00000036461.17"/>
</dbReference>
<dbReference type="Ensembl" id="ENSMUST00000110835.3">
    <property type="protein sequence ID" value="ENSMUSP00000106459.2"/>
    <property type="gene ID" value="ENSMUSG00000036461.17"/>
</dbReference>
<dbReference type="GeneID" id="13709"/>
<dbReference type="KEGG" id="mmu:13709"/>
<dbReference type="UCSC" id="uc007utb.2">
    <property type="organism name" value="mouse"/>
</dbReference>
<dbReference type="AGR" id="MGI:107180"/>
<dbReference type="CTD" id="1997"/>
<dbReference type="MGI" id="MGI:107180">
    <property type="gene designation" value="Elf1"/>
</dbReference>
<dbReference type="VEuPathDB" id="HostDB:ENSMUSG00000036461"/>
<dbReference type="eggNOG" id="KOG3804">
    <property type="taxonomic scope" value="Eukaryota"/>
</dbReference>
<dbReference type="GeneTree" id="ENSGT00940000157039"/>
<dbReference type="HOGENOM" id="CLU_027279_1_0_1"/>
<dbReference type="InParanoid" id="Q60775"/>
<dbReference type="OMA" id="DEKRMTT"/>
<dbReference type="OrthoDB" id="8196042at2759"/>
<dbReference type="PhylomeDB" id="Q60775"/>
<dbReference type="TreeFam" id="TF318679"/>
<dbReference type="Reactome" id="R-MMU-8939247">
    <property type="pathway name" value="RUNX1 regulates transcription of genes involved in interleukin signaling"/>
</dbReference>
<dbReference type="BioGRID-ORCS" id="13709">
    <property type="hits" value="5 hits in 79 CRISPR screens"/>
</dbReference>
<dbReference type="ChiTaRS" id="Elf1">
    <property type="organism name" value="mouse"/>
</dbReference>
<dbReference type="PRO" id="PR:Q60775"/>
<dbReference type="Proteomes" id="UP000000589">
    <property type="component" value="Chromosome 14"/>
</dbReference>
<dbReference type="RNAct" id="Q60775">
    <property type="molecule type" value="protein"/>
</dbReference>
<dbReference type="Bgee" id="ENSMUSG00000036461">
    <property type="expression patterns" value="Expressed in peripheral lymph node and 230 other cell types or tissues"/>
</dbReference>
<dbReference type="ExpressionAtlas" id="Q60775">
    <property type="expression patterns" value="baseline and differential"/>
</dbReference>
<dbReference type="GO" id="GO:0005634">
    <property type="term" value="C:nucleus"/>
    <property type="evidence" value="ECO:0000314"/>
    <property type="project" value="MGI"/>
</dbReference>
<dbReference type="GO" id="GO:0001228">
    <property type="term" value="F:DNA-binding transcription activator activity, RNA polymerase II-specific"/>
    <property type="evidence" value="ECO:0000314"/>
    <property type="project" value="NTNU_SB"/>
</dbReference>
<dbReference type="GO" id="GO:0003700">
    <property type="term" value="F:DNA-binding transcription factor activity"/>
    <property type="evidence" value="ECO:0000250"/>
    <property type="project" value="UniProtKB"/>
</dbReference>
<dbReference type="GO" id="GO:0000978">
    <property type="term" value="F:RNA polymerase II cis-regulatory region sequence-specific DNA binding"/>
    <property type="evidence" value="ECO:0000314"/>
    <property type="project" value="NTNU_SB"/>
</dbReference>
<dbReference type="GO" id="GO:0050860">
    <property type="term" value="P:negative regulation of T cell receptor signaling pathway"/>
    <property type="evidence" value="ECO:0000316"/>
    <property type="project" value="MGI"/>
</dbReference>
<dbReference type="GO" id="GO:0045944">
    <property type="term" value="P:positive regulation of transcription by RNA polymerase II"/>
    <property type="evidence" value="ECO:0000315"/>
    <property type="project" value="NTNU_SB"/>
</dbReference>
<dbReference type="GO" id="GO:0001817">
    <property type="term" value="P:regulation of cytokine production"/>
    <property type="evidence" value="ECO:0000316"/>
    <property type="project" value="MGI"/>
</dbReference>
<dbReference type="FunFam" id="1.10.10.10:FF:000066">
    <property type="entry name" value="ETS-related transcription factor Elf-2 isoform X1"/>
    <property type="match status" value="1"/>
</dbReference>
<dbReference type="Gene3D" id="1.10.10.10">
    <property type="entry name" value="Winged helix-like DNA-binding domain superfamily/Winged helix DNA-binding domain"/>
    <property type="match status" value="1"/>
</dbReference>
<dbReference type="InterPro" id="IPR000418">
    <property type="entry name" value="Ets_dom"/>
</dbReference>
<dbReference type="InterPro" id="IPR046328">
    <property type="entry name" value="ETS_fam"/>
</dbReference>
<dbReference type="InterPro" id="IPR022084">
    <property type="entry name" value="TF_Elf_N"/>
</dbReference>
<dbReference type="InterPro" id="IPR036388">
    <property type="entry name" value="WH-like_DNA-bd_sf"/>
</dbReference>
<dbReference type="InterPro" id="IPR036390">
    <property type="entry name" value="WH_DNA-bd_sf"/>
</dbReference>
<dbReference type="PANTHER" id="PTHR11849">
    <property type="entry name" value="ETS"/>
    <property type="match status" value="1"/>
</dbReference>
<dbReference type="PANTHER" id="PTHR11849:SF156">
    <property type="entry name" value="ETS-RELATED TRANSCRIPTION FACTOR ELF-1"/>
    <property type="match status" value="1"/>
</dbReference>
<dbReference type="Pfam" id="PF12310">
    <property type="entry name" value="Elf-1_N"/>
    <property type="match status" value="1"/>
</dbReference>
<dbReference type="Pfam" id="PF00178">
    <property type="entry name" value="Ets"/>
    <property type="match status" value="1"/>
</dbReference>
<dbReference type="PRINTS" id="PR00454">
    <property type="entry name" value="ETSDOMAIN"/>
</dbReference>
<dbReference type="SMART" id="SM00413">
    <property type="entry name" value="ETS"/>
    <property type="match status" value="1"/>
</dbReference>
<dbReference type="SUPFAM" id="SSF46785">
    <property type="entry name" value="Winged helix' DNA-binding domain"/>
    <property type="match status" value="1"/>
</dbReference>
<dbReference type="PROSITE" id="PS00345">
    <property type="entry name" value="ETS_DOMAIN_1"/>
    <property type="match status" value="1"/>
</dbReference>
<dbReference type="PROSITE" id="PS00346">
    <property type="entry name" value="ETS_DOMAIN_2"/>
    <property type="match status" value="1"/>
</dbReference>
<dbReference type="PROSITE" id="PS50061">
    <property type="entry name" value="ETS_DOMAIN_3"/>
    <property type="match status" value="1"/>
</dbReference>
<reference key="1">
    <citation type="journal article" date="1996" name="Gene">
        <title>Cloning and expression of the murine Elf-1 cDNA.</title>
        <authorList>
            <person name="Davis J.N."/>
            <person name="Roussel M.F."/>
        </authorList>
    </citation>
    <scope>NUCLEOTIDE SEQUENCE [MRNA]</scope>
    <source>
        <tissue>Fibroblast</tissue>
    </source>
</reference>
<reference key="2">
    <citation type="journal article" date="2004" name="Genome Res.">
        <title>The status, quality, and expansion of the NIH full-length cDNA project: the Mammalian Gene Collection (MGC).</title>
        <authorList>
            <consortium name="The MGC Project Team"/>
        </authorList>
    </citation>
    <scope>NUCLEOTIDE SEQUENCE [LARGE SCALE MRNA]</scope>
    <source>
        <strain>C57BL/6J</strain>
        <tissue>Brain</tissue>
    </source>
</reference>
<reference key="3">
    <citation type="journal article" date="2010" name="Cell">
        <title>A tissue-specific atlas of mouse protein phosphorylation and expression.</title>
        <authorList>
            <person name="Huttlin E.L."/>
            <person name="Jedrychowski M.P."/>
            <person name="Elias J.E."/>
            <person name="Goswami T."/>
            <person name="Rad R."/>
            <person name="Beausoleil S.A."/>
            <person name="Villen J."/>
            <person name="Haas W."/>
            <person name="Sowa M.E."/>
            <person name="Gygi S.P."/>
        </authorList>
    </citation>
    <scope>IDENTIFICATION BY MASS SPECTROMETRY [LARGE SCALE ANALYSIS]</scope>
    <source>
        <tissue>Spleen</tissue>
    </source>
</reference>
<gene>
    <name type="primary">Elf1</name>
</gene>
<protein>
    <recommendedName>
        <fullName>ETS-related transcription factor Elf-1</fullName>
    </recommendedName>
    <alternativeName>
        <fullName>E74-like factor 1</fullName>
    </alternativeName>
</protein>
<name>ELF1_MOUSE</name>